<gene>
    <name type="primary">EEF2KMT</name>
    <name type="synonym">FAM86A</name>
</gene>
<accession>Q1JPJ9</accession>
<proteinExistence type="evidence at transcript level"/>
<keyword id="KW-0007">Acetylation</keyword>
<keyword id="KW-0963">Cytoplasm</keyword>
<keyword id="KW-0489">Methyltransferase</keyword>
<keyword id="KW-1185">Reference proteome</keyword>
<keyword id="KW-0949">S-adenosyl-L-methionine</keyword>
<keyword id="KW-0808">Transferase</keyword>
<protein>
    <recommendedName>
        <fullName evidence="3">Protein-lysine N-methyltransferase EEF2KMT</fullName>
        <ecNumber evidence="1">2.1.1.-</ecNumber>
    </recommendedName>
    <alternativeName>
        <fullName>eEF2-lysine methyltransferase</fullName>
        <shortName>eEF2-KMT</shortName>
    </alternativeName>
</protein>
<evidence type="ECO:0000250" key="1">
    <source>
        <dbReference type="UniProtKB" id="Q96G04"/>
    </source>
</evidence>
<evidence type="ECO:0000250" key="2">
    <source>
        <dbReference type="UniProtKB" id="Q9H867"/>
    </source>
</evidence>
<evidence type="ECO:0000305" key="3"/>
<feature type="chain" id="PRO_0000332111" description="Protein-lysine N-methyltransferase EEF2KMT">
    <location>
        <begin position="1"/>
        <end position="340"/>
    </location>
</feature>
<feature type="binding site" evidence="2">
    <location>
        <position position="139"/>
    </location>
    <ligand>
        <name>S-adenosyl-L-methionine</name>
        <dbReference type="ChEBI" id="CHEBI:59789"/>
    </ligand>
</feature>
<feature type="binding site" evidence="2">
    <location>
        <begin position="165"/>
        <end position="167"/>
    </location>
    <ligand>
        <name>S-adenosyl-L-methionine</name>
        <dbReference type="ChEBI" id="CHEBI:59789"/>
    </ligand>
</feature>
<feature type="binding site" evidence="2">
    <location>
        <position position="238"/>
    </location>
    <ligand>
        <name>S-adenosyl-L-methionine</name>
        <dbReference type="ChEBI" id="CHEBI:59789"/>
    </ligand>
</feature>
<feature type="binding site" evidence="2">
    <location>
        <position position="257"/>
    </location>
    <ligand>
        <name>S-adenosyl-L-methionine</name>
        <dbReference type="ChEBI" id="CHEBI:59789"/>
    </ligand>
</feature>
<feature type="modified residue" description="N-acetylmethionine" evidence="1">
    <location>
        <position position="1"/>
    </location>
</feature>
<comment type="function">
    <text evidence="1">Catalyzes the trimethylation of eukaryotic elongation factor 2 (EEF2) on 'Lys-525'.</text>
</comment>
<comment type="catalytic activity">
    <reaction evidence="1">
        <text>L-lysyl-[protein] + 3 S-adenosyl-L-methionine = N(6),N(6),N(6)-trimethyl-L-lysyl-[protein] + 3 S-adenosyl-L-homocysteine + 3 H(+)</text>
        <dbReference type="Rhea" id="RHEA:54192"/>
        <dbReference type="Rhea" id="RHEA-COMP:9752"/>
        <dbReference type="Rhea" id="RHEA-COMP:13826"/>
        <dbReference type="ChEBI" id="CHEBI:15378"/>
        <dbReference type="ChEBI" id="CHEBI:29969"/>
        <dbReference type="ChEBI" id="CHEBI:57856"/>
        <dbReference type="ChEBI" id="CHEBI:59789"/>
        <dbReference type="ChEBI" id="CHEBI:61961"/>
    </reaction>
    <physiologicalReaction direction="left-to-right" evidence="1">
        <dbReference type="Rhea" id="RHEA:54193"/>
    </physiologicalReaction>
</comment>
<comment type="subunit">
    <text evidence="1">Interacts with FAM86B2 and FAM86C1P.</text>
</comment>
<comment type="subcellular location">
    <subcellularLocation>
        <location evidence="1">Cytoplasm</location>
    </subcellularLocation>
</comment>
<comment type="similarity">
    <text evidence="3">Belongs to the class I-like SAM-binding methyltransferase superfamily. EEF2KMT family.</text>
</comment>
<sequence>MAPEERADAARLLRGFERRFLAARALRSFPWQSLEEKLRDSSGSELLLDILQKTVKHPLCVKHPPSVKYSRSFLSELIRKHEAVHTEPLDELYQALAEVLTAEDPTHCHRSYLLPSGDSVTLCESTAIVSHGTTGLVTWNAALYLAEWAVENPAVFAHRMVLELGSGAGLTGLAICKTCRPRAYIFSDCHSHVLEQLRGNVLLNGFSLEPSIDTWAQHPGPHTPEAERPWVTVARLDWDTVTAPQLAAFQPDVVLAADVLYCPETVLSLVGVLRKLSTCRKDQRAPDAYIAFTVRNPETCQLFTTELGQAGIPWEEVPCHDQKLFPYEEHSEMAILKLTL</sequence>
<dbReference type="EC" id="2.1.1.-" evidence="1"/>
<dbReference type="EMBL" id="AAFC03051150">
    <property type="status" value="NOT_ANNOTATED_CDS"/>
    <property type="molecule type" value="Genomic_DNA"/>
</dbReference>
<dbReference type="EMBL" id="BT025354">
    <property type="protein sequence ID" value="ABF57310.1"/>
    <property type="molecule type" value="mRNA"/>
</dbReference>
<dbReference type="RefSeq" id="NP_001157410.1">
    <property type="nucleotide sequence ID" value="NM_001163938.1"/>
</dbReference>
<dbReference type="SMR" id="Q1JPJ9"/>
<dbReference type="FunCoup" id="Q1JPJ9">
    <property type="interactions" value="2807"/>
</dbReference>
<dbReference type="STRING" id="9913.ENSBTAP00000037316"/>
<dbReference type="PaxDb" id="9913-ENSBTAP00000037316"/>
<dbReference type="GeneID" id="531984"/>
<dbReference type="KEGG" id="bta:531984"/>
<dbReference type="CTD" id="196483"/>
<dbReference type="VEuPathDB" id="HostDB:ENSBTAG00000008222"/>
<dbReference type="eggNOG" id="KOG2497">
    <property type="taxonomic scope" value="Eukaryota"/>
</dbReference>
<dbReference type="InParanoid" id="Q1JPJ9"/>
<dbReference type="OMA" id="PIRTYRI"/>
<dbReference type="OrthoDB" id="194386at2759"/>
<dbReference type="Reactome" id="R-BTA-8876725">
    <property type="pathway name" value="Protein methylation"/>
</dbReference>
<dbReference type="Proteomes" id="UP000009136">
    <property type="component" value="Chromosome 25"/>
</dbReference>
<dbReference type="Bgee" id="ENSBTAG00000008222">
    <property type="expression patterns" value="Expressed in oocyte and 105 other cell types or tissues"/>
</dbReference>
<dbReference type="GO" id="GO:0005737">
    <property type="term" value="C:cytoplasm"/>
    <property type="evidence" value="ECO:0007669"/>
    <property type="project" value="UniProtKB-SubCell"/>
</dbReference>
<dbReference type="GO" id="GO:0032991">
    <property type="term" value="C:protein-containing complex"/>
    <property type="evidence" value="ECO:0000318"/>
    <property type="project" value="GO_Central"/>
</dbReference>
<dbReference type="GO" id="GO:0016279">
    <property type="term" value="F:protein-lysine N-methyltransferase activity"/>
    <property type="evidence" value="ECO:0000250"/>
    <property type="project" value="UniProtKB"/>
</dbReference>
<dbReference type="GO" id="GO:0018023">
    <property type="term" value="P:peptidyl-lysine trimethylation"/>
    <property type="evidence" value="ECO:0000250"/>
    <property type="project" value="UniProtKB"/>
</dbReference>
<dbReference type="FunFam" id="3.40.50.150:FF:000242">
    <property type="entry name" value="Protein-lysine N-methyltransferase EEF2KMT"/>
    <property type="match status" value="1"/>
</dbReference>
<dbReference type="Gene3D" id="3.40.50.150">
    <property type="entry name" value="Vaccinia Virus protein VP39"/>
    <property type="match status" value="1"/>
</dbReference>
<dbReference type="InterPro" id="IPR029426">
    <property type="entry name" value="FAM86_N"/>
</dbReference>
<dbReference type="InterPro" id="IPR019410">
    <property type="entry name" value="Methyltransf_16"/>
</dbReference>
<dbReference type="InterPro" id="IPR029063">
    <property type="entry name" value="SAM-dependent_MTases_sf"/>
</dbReference>
<dbReference type="PANTHER" id="PTHR14614">
    <property type="entry name" value="HEPATOCELLULAR CARCINOMA-ASSOCIATED ANTIGEN"/>
    <property type="match status" value="1"/>
</dbReference>
<dbReference type="PANTHER" id="PTHR14614:SF130">
    <property type="entry name" value="PROTEIN-LYSINE N-METHYLTRANSFERASE EEF2KMT"/>
    <property type="match status" value="1"/>
</dbReference>
<dbReference type="Pfam" id="PF14904">
    <property type="entry name" value="FAM86"/>
    <property type="match status" value="1"/>
</dbReference>
<dbReference type="Pfam" id="PF10294">
    <property type="entry name" value="Methyltransf_16"/>
    <property type="match status" value="1"/>
</dbReference>
<dbReference type="SUPFAM" id="SSF53335">
    <property type="entry name" value="S-adenosyl-L-methionine-dependent methyltransferases"/>
    <property type="match status" value="1"/>
</dbReference>
<reference key="1">
    <citation type="journal article" date="2009" name="Science">
        <title>The genome sequence of taurine cattle: a window to ruminant biology and evolution.</title>
        <authorList>
            <consortium name="The bovine genome sequencing and analysis consortium"/>
        </authorList>
    </citation>
    <scope>NUCLEOTIDE SEQUENCE [LARGE SCALE GENOMIC DNA]</scope>
    <source>
        <strain>Hereford</strain>
    </source>
</reference>
<reference key="2">
    <citation type="journal article" date="2005" name="BMC Genomics">
        <title>Characterization of 954 bovine full-CDS cDNA sequences.</title>
        <authorList>
            <person name="Harhay G.P."/>
            <person name="Sonstegard T.S."/>
            <person name="Keele J.W."/>
            <person name="Heaton M.P."/>
            <person name="Clawson M.L."/>
            <person name="Snelling W.M."/>
            <person name="Wiedmann R.T."/>
            <person name="Van Tassell C.P."/>
            <person name="Smith T.P.L."/>
        </authorList>
    </citation>
    <scope>NUCLEOTIDE SEQUENCE [LARGE SCALE MRNA] OF 5-340</scope>
</reference>
<organism>
    <name type="scientific">Bos taurus</name>
    <name type="common">Bovine</name>
    <dbReference type="NCBI Taxonomy" id="9913"/>
    <lineage>
        <taxon>Eukaryota</taxon>
        <taxon>Metazoa</taxon>
        <taxon>Chordata</taxon>
        <taxon>Craniata</taxon>
        <taxon>Vertebrata</taxon>
        <taxon>Euteleostomi</taxon>
        <taxon>Mammalia</taxon>
        <taxon>Eutheria</taxon>
        <taxon>Laurasiatheria</taxon>
        <taxon>Artiodactyla</taxon>
        <taxon>Ruminantia</taxon>
        <taxon>Pecora</taxon>
        <taxon>Bovidae</taxon>
        <taxon>Bovinae</taxon>
        <taxon>Bos</taxon>
    </lineage>
</organism>
<name>EF2KT_BOVIN</name>